<dbReference type="EMBL" id="AE014075">
    <property type="protein sequence ID" value="AAN82021.1"/>
    <property type="molecule type" value="Genomic_DNA"/>
</dbReference>
<dbReference type="RefSeq" id="WP_000376545.1">
    <property type="nucleotide sequence ID" value="NZ_CP051263.1"/>
</dbReference>
<dbReference type="PDB" id="7SGR">
    <property type="method" value="EM"/>
    <property type="resolution" value="2.90 A"/>
    <property type="chains" value="A/B/E/F/I/J=1-707"/>
</dbReference>
<dbReference type="PDB" id="8DCK">
    <property type="method" value="EM"/>
    <property type="resolution" value="3.40 A"/>
    <property type="chains" value="A/B/E/F/I/J=1-707"/>
</dbReference>
<dbReference type="PDBsum" id="7SGR"/>
<dbReference type="PDBsum" id="8DCK"/>
<dbReference type="BMRB" id="Q8FDZ8"/>
<dbReference type="EMDB" id="EMD-25116"/>
<dbReference type="EMDB" id="EMD-27326"/>
<dbReference type="SMR" id="Q8FDZ8"/>
<dbReference type="STRING" id="199310.c3573"/>
<dbReference type="KEGG" id="ecc:c3573"/>
<dbReference type="eggNOG" id="COG2274">
    <property type="taxonomic scope" value="Bacteria"/>
</dbReference>
<dbReference type="HOGENOM" id="CLU_000604_95_4_6"/>
<dbReference type="BioCyc" id="ECOL199310:C3573-MONOMER"/>
<dbReference type="Proteomes" id="UP000001410">
    <property type="component" value="Chromosome"/>
</dbReference>
<dbReference type="GO" id="GO:0005886">
    <property type="term" value="C:plasma membrane"/>
    <property type="evidence" value="ECO:0007669"/>
    <property type="project" value="UniProtKB-SubCell"/>
</dbReference>
<dbReference type="GO" id="GO:0030256">
    <property type="term" value="C:type I protein secretion system complex"/>
    <property type="evidence" value="ECO:0007669"/>
    <property type="project" value="InterPro"/>
</dbReference>
<dbReference type="GO" id="GO:0015421">
    <property type="term" value="F:ABC-type oligopeptide transporter activity"/>
    <property type="evidence" value="ECO:0007669"/>
    <property type="project" value="TreeGrafter"/>
</dbReference>
<dbReference type="GO" id="GO:0005524">
    <property type="term" value="F:ATP binding"/>
    <property type="evidence" value="ECO:0007669"/>
    <property type="project" value="UniProtKB-KW"/>
</dbReference>
<dbReference type="GO" id="GO:0016887">
    <property type="term" value="F:ATP hydrolysis activity"/>
    <property type="evidence" value="ECO:0007669"/>
    <property type="project" value="InterPro"/>
</dbReference>
<dbReference type="GO" id="GO:0008233">
    <property type="term" value="F:peptidase activity"/>
    <property type="evidence" value="ECO:0007669"/>
    <property type="project" value="InterPro"/>
</dbReference>
<dbReference type="GO" id="GO:0030253">
    <property type="term" value="P:protein secretion by the type I secretion system"/>
    <property type="evidence" value="ECO:0007669"/>
    <property type="project" value="InterPro"/>
</dbReference>
<dbReference type="GO" id="GO:0006508">
    <property type="term" value="P:proteolysis"/>
    <property type="evidence" value="ECO:0007669"/>
    <property type="project" value="InterPro"/>
</dbReference>
<dbReference type="CDD" id="cd18588">
    <property type="entry name" value="ABC_6TM_CyaB_HlyB_like"/>
    <property type="match status" value="1"/>
</dbReference>
<dbReference type="CDD" id="cd03252">
    <property type="entry name" value="ABCC_Hemolysin"/>
    <property type="match status" value="1"/>
</dbReference>
<dbReference type="CDD" id="cd02417">
    <property type="entry name" value="Peptidase_C39_likeA"/>
    <property type="match status" value="1"/>
</dbReference>
<dbReference type="FunFam" id="3.40.50.300:FF:000299">
    <property type="entry name" value="ABC transporter ATP-binding protein/permease"/>
    <property type="match status" value="1"/>
</dbReference>
<dbReference type="FunFam" id="1.20.1560.10:FF:000056">
    <property type="entry name" value="Alpha-hemolysin translocation ATP-binding protein HlyB"/>
    <property type="match status" value="1"/>
</dbReference>
<dbReference type="FunFam" id="3.90.70.10:FF:000148">
    <property type="entry name" value="Alpha-hemolysin translocation ATP-binding protein HlyB"/>
    <property type="match status" value="1"/>
</dbReference>
<dbReference type="Gene3D" id="1.20.1560.10">
    <property type="entry name" value="ABC transporter type 1, transmembrane domain"/>
    <property type="match status" value="1"/>
</dbReference>
<dbReference type="Gene3D" id="3.90.70.10">
    <property type="entry name" value="Cysteine proteinases"/>
    <property type="match status" value="1"/>
</dbReference>
<dbReference type="Gene3D" id="3.40.50.300">
    <property type="entry name" value="P-loop containing nucleotide triphosphate hydrolases"/>
    <property type="match status" value="1"/>
</dbReference>
<dbReference type="InterPro" id="IPR003593">
    <property type="entry name" value="AAA+_ATPase"/>
</dbReference>
<dbReference type="InterPro" id="IPR011527">
    <property type="entry name" value="ABC1_TM_dom"/>
</dbReference>
<dbReference type="InterPro" id="IPR036640">
    <property type="entry name" value="ABC1_TM_sf"/>
</dbReference>
<dbReference type="InterPro" id="IPR003439">
    <property type="entry name" value="ABC_transporter-like_ATP-bd"/>
</dbReference>
<dbReference type="InterPro" id="IPR017871">
    <property type="entry name" value="ABC_transporter-like_CS"/>
</dbReference>
<dbReference type="InterPro" id="IPR010132">
    <property type="entry name" value="ATPase_T1SS_HlyB"/>
</dbReference>
<dbReference type="InterPro" id="IPR027417">
    <property type="entry name" value="P-loop_NTPase"/>
</dbReference>
<dbReference type="InterPro" id="IPR005074">
    <property type="entry name" value="Peptidase_C39"/>
</dbReference>
<dbReference type="InterPro" id="IPR039395">
    <property type="entry name" value="Peptidase_C39-like_A"/>
</dbReference>
<dbReference type="InterPro" id="IPR039421">
    <property type="entry name" value="Type_1_exporter"/>
</dbReference>
<dbReference type="NCBIfam" id="TIGR01846">
    <property type="entry name" value="type_I_sec_HlyB"/>
    <property type="match status" value="1"/>
</dbReference>
<dbReference type="PANTHER" id="PTHR43394:SF1">
    <property type="entry name" value="ATP-BINDING CASSETTE SUB-FAMILY B MEMBER 10, MITOCHONDRIAL"/>
    <property type="match status" value="1"/>
</dbReference>
<dbReference type="PANTHER" id="PTHR43394">
    <property type="entry name" value="ATP-DEPENDENT PERMEASE MDL1, MITOCHONDRIAL"/>
    <property type="match status" value="1"/>
</dbReference>
<dbReference type="Pfam" id="PF00664">
    <property type="entry name" value="ABC_membrane"/>
    <property type="match status" value="1"/>
</dbReference>
<dbReference type="Pfam" id="PF00005">
    <property type="entry name" value="ABC_tran"/>
    <property type="match status" value="1"/>
</dbReference>
<dbReference type="Pfam" id="PF03412">
    <property type="entry name" value="Peptidase_C39"/>
    <property type="match status" value="1"/>
</dbReference>
<dbReference type="SMART" id="SM00382">
    <property type="entry name" value="AAA"/>
    <property type="match status" value="1"/>
</dbReference>
<dbReference type="SUPFAM" id="SSF90123">
    <property type="entry name" value="ABC transporter transmembrane region"/>
    <property type="match status" value="1"/>
</dbReference>
<dbReference type="SUPFAM" id="SSF52540">
    <property type="entry name" value="P-loop containing nucleoside triphosphate hydrolases"/>
    <property type="match status" value="1"/>
</dbReference>
<dbReference type="PROSITE" id="PS50929">
    <property type="entry name" value="ABC_TM1F"/>
    <property type="match status" value="1"/>
</dbReference>
<dbReference type="PROSITE" id="PS00211">
    <property type="entry name" value="ABC_TRANSPORTER_1"/>
    <property type="match status" value="1"/>
</dbReference>
<dbReference type="PROSITE" id="PS50893">
    <property type="entry name" value="ABC_TRANSPORTER_2"/>
    <property type="match status" value="1"/>
</dbReference>
<dbReference type="PROSITE" id="PS50990">
    <property type="entry name" value="PEPTIDASE_C39"/>
    <property type="match status" value="1"/>
</dbReference>
<name>HLYB_ECOL6</name>
<accession>Q8FDZ8</accession>
<keyword id="KW-0002">3D-structure</keyword>
<keyword id="KW-0067">ATP-binding</keyword>
<keyword id="KW-0997">Cell inner membrane</keyword>
<keyword id="KW-1003">Cell membrane</keyword>
<keyword id="KW-0378">Hydrolase</keyword>
<keyword id="KW-0472">Membrane</keyword>
<keyword id="KW-0547">Nucleotide-binding</keyword>
<keyword id="KW-1185">Reference proteome</keyword>
<keyword id="KW-0812">Transmembrane</keyword>
<keyword id="KW-1133">Transmembrane helix</keyword>
<keyword id="KW-0813">Transport</keyword>
<feature type="chain" id="PRO_0000092374" description="Alpha-hemolysin translocation ATP-binding protein HlyB">
    <location>
        <begin position="1"/>
        <end position="707"/>
    </location>
</feature>
<feature type="transmembrane region" description="Helical" evidence="4">
    <location>
        <begin position="158"/>
        <end position="178"/>
    </location>
</feature>
<feature type="transmembrane region" description="Helical" evidence="4">
    <location>
        <begin position="191"/>
        <end position="211"/>
    </location>
</feature>
<feature type="transmembrane region" description="Helical" evidence="4">
    <location>
        <begin position="269"/>
        <end position="289"/>
    </location>
</feature>
<feature type="transmembrane region" description="Helical" evidence="4">
    <location>
        <begin position="295"/>
        <end position="315"/>
    </location>
</feature>
<feature type="transmembrane region" description="Helical" evidence="4">
    <location>
        <begin position="388"/>
        <end position="408"/>
    </location>
</feature>
<feature type="domain" description="Peptidase C39" evidence="2">
    <location>
        <begin position="3"/>
        <end position="125"/>
    </location>
</feature>
<feature type="domain" description="ABC transmembrane type-1" evidence="4">
    <location>
        <begin position="154"/>
        <end position="436"/>
    </location>
</feature>
<feature type="domain" description="ABC transporter" evidence="2 3">
    <location>
        <begin position="468"/>
        <end position="703"/>
    </location>
</feature>
<feature type="active site" evidence="2">
    <location>
        <position position="83"/>
    </location>
</feature>
<feature type="binding site" evidence="2 3">
    <location>
        <begin position="502"/>
        <end position="509"/>
    </location>
    <ligand>
        <name>ATP</name>
        <dbReference type="ChEBI" id="CHEBI:30616"/>
    </ligand>
</feature>
<feature type="helix" evidence="6">
    <location>
        <begin position="9"/>
        <end position="20"/>
    </location>
</feature>
<feature type="helix" evidence="6">
    <location>
        <begin position="27"/>
        <end position="34"/>
    </location>
</feature>
<feature type="helix" evidence="6">
    <location>
        <begin position="43"/>
        <end position="52"/>
    </location>
</feature>
<feature type="strand" evidence="6">
    <location>
        <begin position="55"/>
        <end position="61"/>
    </location>
</feature>
<feature type="helix" evidence="6">
    <location>
        <begin position="65"/>
        <end position="69"/>
    </location>
</feature>
<feature type="strand" evidence="6">
    <location>
        <begin position="74"/>
        <end position="76"/>
    </location>
</feature>
<feature type="strand" evidence="6">
    <location>
        <begin position="79"/>
        <end position="81"/>
    </location>
</feature>
<feature type="strand" evidence="6">
    <location>
        <begin position="84"/>
        <end position="86"/>
    </location>
</feature>
<feature type="turn" evidence="6">
    <location>
        <begin position="91"/>
        <end position="94"/>
    </location>
</feature>
<feature type="strand" evidence="6">
    <location>
        <begin position="95"/>
        <end position="100"/>
    </location>
</feature>
<feature type="turn" evidence="6">
    <location>
        <begin position="101"/>
        <end position="104"/>
    </location>
</feature>
<feature type="strand" evidence="6">
    <location>
        <begin position="105"/>
        <end position="109"/>
    </location>
</feature>
<feature type="helix" evidence="6">
    <location>
        <begin position="111"/>
        <end position="117"/>
    </location>
</feature>
<feature type="strand" evidence="6">
    <location>
        <begin position="120"/>
        <end position="127"/>
    </location>
</feature>
<feature type="helix" evidence="7">
    <location>
        <begin position="140"/>
        <end position="142"/>
    </location>
</feature>
<feature type="helix" evidence="6">
    <location>
        <begin position="143"/>
        <end position="149"/>
    </location>
</feature>
<feature type="helix" evidence="6">
    <location>
        <begin position="151"/>
        <end position="181"/>
    </location>
</feature>
<feature type="turn" evidence="6">
    <location>
        <begin position="182"/>
        <end position="185"/>
    </location>
</feature>
<feature type="helix" evidence="6">
    <location>
        <begin position="189"/>
        <end position="236"/>
    </location>
</feature>
<feature type="helix" evidence="6">
    <location>
        <begin position="240"/>
        <end position="244"/>
    </location>
</feature>
<feature type="helix" evidence="6">
    <location>
        <begin position="248"/>
        <end position="265"/>
    </location>
</feature>
<feature type="strand" evidence="6">
    <location>
        <begin position="266"/>
        <end position="269"/>
    </location>
</feature>
<feature type="helix" evidence="6">
    <location>
        <begin position="270"/>
        <end position="277"/>
    </location>
</feature>
<feature type="helix" evidence="6">
    <location>
        <begin position="280"/>
        <end position="289"/>
    </location>
</feature>
<feature type="helix" evidence="6">
    <location>
        <begin position="291"/>
        <end position="338"/>
    </location>
</feature>
<feature type="helix" evidence="6">
    <location>
        <begin position="340"/>
        <end position="345"/>
    </location>
</feature>
<feature type="helix" evidence="6">
    <location>
        <begin position="350"/>
        <end position="401"/>
    </location>
</feature>
<feature type="strand" evidence="6">
    <location>
        <begin position="403"/>
        <end position="405"/>
    </location>
</feature>
<feature type="helix" evidence="6">
    <location>
        <begin position="407"/>
        <end position="428"/>
    </location>
</feature>
<feature type="helix" evidence="6">
    <location>
        <begin position="431"/>
        <end position="448"/>
    </location>
</feature>
<feature type="strand" evidence="6">
    <location>
        <begin position="468"/>
        <end position="478"/>
    </location>
</feature>
<feature type="strand" evidence="6">
    <location>
        <begin position="483"/>
        <end position="492"/>
    </location>
</feature>
<feature type="strand" evidence="6">
    <location>
        <begin position="498"/>
        <end position="501"/>
    </location>
</feature>
<feature type="helix" evidence="6">
    <location>
        <begin position="510"/>
        <end position="515"/>
    </location>
</feature>
<feature type="turn" evidence="6">
    <location>
        <begin position="516"/>
        <end position="518"/>
    </location>
</feature>
<feature type="strand" evidence="6">
    <location>
        <begin position="522"/>
        <end position="528"/>
    </location>
</feature>
<feature type="strand" evidence="7">
    <location>
        <begin position="531"/>
        <end position="533"/>
    </location>
</feature>
<feature type="helix" evidence="6">
    <location>
        <begin position="538"/>
        <end position="544"/>
    </location>
</feature>
<feature type="strand" evidence="6">
    <location>
        <begin position="545"/>
        <end position="548"/>
    </location>
</feature>
<feature type="strand" evidence="6">
    <location>
        <begin position="556"/>
        <end position="558"/>
    </location>
</feature>
<feature type="helix" evidence="6">
    <location>
        <begin position="559"/>
        <end position="563"/>
    </location>
</feature>
<feature type="turn" evidence="6">
    <location>
        <begin position="564"/>
        <end position="566"/>
    </location>
</feature>
<feature type="helix" evidence="6">
    <location>
        <begin position="572"/>
        <end position="581"/>
    </location>
</feature>
<feature type="helix" evidence="6">
    <location>
        <begin position="585"/>
        <end position="589"/>
    </location>
</feature>
<feature type="strand" evidence="7">
    <location>
        <begin position="591"/>
        <end position="593"/>
    </location>
</feature>
<feature type="helix" evidence="6">
    <location>
        <begin position="594"/>
        <end position="596"/>
    </location>
</feature>
<feature type="strand" evidence="6">
    <location>
        <begin position="601"/>
        <end position="603"/>
    </location>
</feature>
<feature type="helix" evidence="6">
    <location>
        <begin position="608"/>
        <end position="621"/>
    </location>
</feature>
<feature type="strand" evidence="6">
    <location>
        <begin position="625"/>
        <end position="631"/>
    </location>
</feature>
<feature type="helix" evidence="6">
    <location>
        <begin position="638"/>
        <end position="646"/>
    </location>
</feature>
<feature type="helix" evidence="6">
    <location>
        <begin position="648"/>
        <end position="651"/>
    </location>
</feature>
<feature type="strand" evidence="6">
    <location>
        <begin position="655"/>
        <end position="660"/>
    </location>
</feature>
<feature type="strand" evidence="6">
    <location>
        <begin position="662"/>
        <end position="667"/>
    </location>
</feature>
<feature type="strand" evidence="6">
    <location>
        <begin position="671"/>
        <end position="677"/>
    </location>
</feature>
<feature type="strand" evidence="6">
    <location>
        <begin position="680"/>
        <end position="685"/>
    </location>
</feature>
<feature type="helix" evidence="6">
    <location>
        <begin position="687"/>
        <end position="691"/>
    </location>
</feature>
<feature type="helix" evidence="6">
    <location>
        <begin position="697"/>
        <end position="705"/>
    </location>
</feature>
<sequence>MDSCHKIDYGLYALEILAQYHNVSVNPEEIKHRFDTDGTGLGLTSWLLAAKSLELKVKQVKKTIDRLNFISLPALVWREDGRHFILTKVSKEANRYLIFDLEQRNPRVLEQSEFEALYQGHIILIASRSSVTGKLAKFDFTWFIPAIIKYRKIFIETLVVSVFLQLFALITPLFFQVVMDKVLVHRGFSTLNVITVALSVVVVFEIILSGLRTYIFAHSTSRIDVELGAKLFRHLLALPISYFESRRVGDTVARVRELDQIRNFLTGQALTSVLDLLFSFIFFAVMWYYSPKLTLVILFSLPCYAAWSVFISPILRRRLDDKFSRNADNQSFLVESVTAINTIKAMAVSPQMTNIWDKQLAGYVAAGFKVTVLATIGQQGIQLIQKTVMIINLWLGAHLVISGDLSIGQLIAFNMLAGQIVAPVIRLAQIWQDFQQVGISVTRLGDVLNSPTESYHGKLALPEINGNITFRNIRFRYKPDSPVILDNINLSIKQGEVIGIVGRSGSGKSTLTKLIQRFYIPENGQVLIDGHDLALADPNWLRRQVGVVLQDNVLLNRSIIDNISLANPGMSVEKVIYAAKLAGAHDFISELREGYNTIVGEQGAGLSGGQRQRIAIARALVNNPKILIFDEATSALDYESEHIIMRNMHKICKGRTVIIIAHRLSTVKNADRIIVMEKGKIVEQGKHKELLSEPESLYSYLYQLQSD</sequence>
<protein>
    <recommendedName>
        <fullName>Alpha-hemolysin translocation ATP-binding protein HlyB</fullName>
    </recommendedName>
</protein>
<comment type="function">
    <text evidence="1">Part of the ABC transporter complex HlyBD involved in hemolysin export. Transmembrane domains (TMD) form a pore in the inner membrane and the ATP-binding domain (NBD) is responsible for energy generation (By similarity).</text>
</comment>
<comment type="subunit">
    <text evidence="1">Homodimer.</text>
</comment>
<comment type="subcellular location">
    <subcellularLocation>
        <location evidence="5">Cell inner membrane</location>
        <topology evidence="5">Multi-pass membrane protein</topology>
    </subcellularLocation>
</comment>
<comment type="domain">
    <text>In HlyB the peptidase C39 domain, the ATP-binding domain (NBD) and the transmembrane domain (TMD) are fused.</text>
</comment>
<comment type="miscellaneous">
    <text evidence="1">The complex HlyBD-TolC (OMF) forms a single transport channel across the two membranes, allowing direct export of alpha-hemolysin. These channel is involved in type 1 secretion system (By similarity).</text>
</comment>
<comment type="similarity">
    <text evidence="5">Belongs to the ABC transporter superfamily. Protein-1 exporter (TC 3.A.1.109) family.</text>
</comment>
<comment type="caution">
    <text evidence="5">Tyr-9 is present instead of the conserved Cys which is expected to be the active site residue of peptidase C39. Thus they are presumed to be without peptidase activity.</text>
</comment>
<reference key="1">
    <citation type="journal article" date="2002" name="Proc. Natl. Acad. Sci. U.S.A.">
        <title>Extensive mosaic structure revealed by the complete genome sequence of uropathogenic Escherichia coli.</title>
        <authorList>
            <person name="Welch R.A."/>
            <person name="Burland V."/>
            <person name="Plunkett G. III"/>
            <person name="Redford P."/>
            <person name="Roesch P."/>
            <person name="Rasko D."/>
            <person name="Buckles E.L."/>
            <person name="Liou S.-R."/>
            <person name="Boutin A."/>
            <person name="Hackett J."/>
            <person name="Stroud D."/>
            <person name="Mayhew G.F."/>
            <person name="Rose D.J."/>
            <person name="Zhou S."/>
            <person name="Schwartz D.C."/>
            <person name="Perna N.T."/>
            <person name="Mobley H.L.T."/>
            <person name="Donnenberg M.S."/>
            <person name="Blattner F.R."/>
        </authorList>
    </citation>
    <scope>NUCLEOTIDE SEQUENCE [LARGE SCALE GENOMIC DNA]</scope>
    <source>
        <strain>CFT073 / ATCC 700928 / UPEC</strain>
    </source>
</reference>
<proteinExistence type="evidence at protein level"/>
<organism>
    <name type="scientific">Escherichia coli O6:H1 (strain CFT073 / ATCC 700928 / UPEC)</name>
    <dbReference type="NCBI Taxonomy" id="199310"/>
    <lineage>
        <taxon>Bacteria</taxon>
        <taxon>Pseudomonadati</taxon>
        <taxon>Pseudomonadota</taxon>
        <taxon>Gammaproteobacteria</taxon>
        <taxon>Enterobacterales</taxon>
        <taxon>Enterobacteriaceae</taxon>
        <taxon>Escherichia</taxon>
    </lineage>
</organism>
<gene>
    <name type="primary">hlyB</name>
    <name type="ordered locus">c3573</name>
</gene>
<evidence type="ECO:0000250" key="1"/>
<evidence type="ECO:0000255" key="2">
    <source>
        <dbReference type="PROSITE-ProRule" id="PRU00362"/>
    </source>
</evidence>
<evidence type="ECO:0000255" key="3">
    <source>
        <dbReference type="PROSITE-ProRule" id="PRU00434"/>
    </source>
</evidence>
<evidence type="ECO:0000255" key="4">
    <source>
        <dbReference type="PROSITE-ProRule" id="PRU00441"/>
    </source>
</evidence>
<evidence type="ECO:0000305" key="5"/>
<evidence type="ECO:0007829" key="6">
    <source>
        <dbReference type="PDB" id="7SGR"/>
    </source>
</evidence>
<evidence type="ECO:0007829" key="7">
    <source>
        <dbReference type="PDB" id="8DCK"/>
    </source>
</evidence>